<sequence>MEDFVRQCFNPMIVELAEKAMKEYGEDLKIETNKFAAICTHLEVCFMYSDFHFINEQGESIVVELDDPNALLKHRFEIIEGRDRTMAWTVVNSICNTTGAEKPKFLPDLYDYKENRFIEIGVTRREVHIYYLEKANKIKSENTHIHIFSFTGEEMATKADYTLDEESRARIKTRLFTIRQEMANRGLWDSFVSPKEAKKQLKKNLKSQELCAGLPTKVSRRTSPALRILEPMWMDSNRTAALRASFLKCPKK</sequence>
<organism>
    <name type="scientific">Influenza A virus (strain A/Kitakyushu/159/1993 H3N2)</name>
    <dbReference type="NCBI Taxonomy" id="62478"/>
    <lineage>
        <taxon>Viruses</taxon>
        <taxon>Riboviria</taxon>
        <taxon>Orthornavirae</taxon>
        <taxon>Negarnaviricota</taxon>
        <taxon>Polyploviricotina</taxon>
        <taxon>Insthoviricetes</taxon>
        <taxon>Articulavirales</taxon>
        <taxon>Orthomyxoviridae</taxon>
        <taxon>Alphainfluenzavirus</taxon>
        <taxon>Alphainfluenzavirus influenzae</taxon>
        <taxon>Influenza A virus</taxon>
    </lineage>
</organism>
<reference key="1">
    <citation type="journal article" date="1998" name="J. Virol.">
        <title>Phylogenetic analysis of the entire genome of influenza A (H3N2) viruses from Japan: evidence for genetic reassortment of the six internal genes.</title>
        <authorList>
            <person name="Lindstrom S.E."/>
            <person name="Hiromoto Y."/>
            <person name="Nerome R."/>
            <person name="Omoe K."/>
            <person name="Sugita S."/>
            <person name="Yamazaki Y."/>
            <person name="Takahashi T."/>
            <person name="Nerome K."/>
        </authorList>
    </citation>
    <scope>NUCLEOTIDE SEQUENCE [GENOMIC RNA]</scope>
</reference>
<evidence type="ECO:0000250" key="1">
    <source>
        <dbReference type="UniProtKB" id="P0CK64"/>
    </source>
</evidence>
<evidence type="ECO:0000250" key="2">
    <source>
        <dbReference type="UniProtKB" id="P0CK68"/>
    </source>
</evidence>
<evidence type="ECO:0000250" key="3">
    <source>
        <dbReference type="UniProtKB" id="P0DJW8"/>
    </source>
</evidence>
<evidence type="ECO:0000250" key="4">
    <source>
        <dbReference type="UniProtKB" id="P0DXO5"/>
    </source>
</evidence>
<evidence type="ECO:0000250" key="5">
    <source>
        <dbReference type="UniProtKB" id="P0DXO6"/>
    </source>
</evidence>
<evidence type="ECO:0000305" key="6"/>
<feature type="chain" id="PRO_0000419385" description="Protein PA-X">
    <location>
        <begin position="1"/>
        <end position="252"/>
    </location>
</feature>
<feature type="active site" evidence="2">
    <location>
        <position position="80"/>
    </location>
</feature>
<feature type="active site" evidence="2">
    <location>
        <position position="108"/>
    </location>
</feature>
<feature type="site" description="Important for efficient shutoff activity" evidence="5">
    <location>
        <position position="28"/>
    </location>
</feature>
<feature type="site" description="Important for efficient shutoff activity" evidence="5">
    <location>
        <position position="65"/>
    </location>
</feature>
<feature type="site" description="Important for efficient shutoff activity and nuclear localization" evidence="4">
    <location>
        <position position="195"/>
    </location>
</feature>
<feature type="site" description="Important for efficient shutoff activity and nuclear localization" evidence="4">
    <location>
        <position position="198"/>
    </location>
</feature>
<feature type="site" description="Important for efficient shutoff activity and nuclear localization" evidence="4">
    <location>
        <position position="199"/>
    </location>
</feature>
<feature type="site" description="Important for efficient shutoff activity" evidence="3">
    <location>
        <position position="202"/>
    </location>
</feature>
<feature type="site" description="Important for efficient shutoff activity" evidence="3">
    <location>
        <position position="203"/>
    </location>
</feature>
<feature type="site" description="Important for efficient shutoff activity" evidence="3">
    <location>
        <position position="206"/>
    </location>
</feature>
<organismHost>
    <name type="scientific">Aves</name>
    <dbReference type="NCBI Taxonomy" id="8782"/>
</organismHost>
<organismHost>
    <name type="scientific">Homo sapiens</name>
    <name type="common">Human</name>
    <dbReference type="NCBI Taxonomy" id="9606"/>
</organismHost>
<organismHost>
    <name type="scientific">Phocidae</name>
    <name type="common">true seals</name>
    <dbReference type="NCBI Taxonomy" id="9709"/>
</organismHost>
<organismHost>
    <name type="scientific">Sus scrofa</name>
    <name type="common">Pig</name>
    <dbReference type="NCBI Taxonomy" id="9823"/>
</organismHost>
<proteinExistence type="inferred from homology"/>
<name>PAX_I93A0</name>
<protein>
    <recommendedName>
        <fullName>Protein PA-X</fullName>
    </recommendedName>
</protein>
<comment type="function">
    <text evidence="1 4">Plays a major role in the shutoff of the host protein expression by cleaving mRNAs probably via an endonuclease activity. This host shutoff allows the virus to escape from the host antiviral response (By similarity). Hijacks host RNA splicing machinery to selectively target host RNAs containing introns for destruction. This may explain the preferential degradation of RNAs that have undergone co- or post-transcriptional processing (By similarity).</text>
</comment>
<comment type="subcellular location">
    <subcellularLocation>
        <location evidence="4">Host cytoplasm</location>
    </subcellularLocation>
    <subcellularLocation>
        <location evidence="4">Host nucleus</location>
    </subcellularLocation>
</comment>
<comment type="alternative products">
    <event type="ribosomal frameshifting"/>
    <isoform>
        <id>P0DJS2-1</id>
        <name>PA-X</name>
        <sequence type="displayed"/>
    </isoform>
    <isoform>
        <id>O91742-1</id>
        <name>PA</name>
        <sequence type="external"/>
    </isoform>
</comment>
<comment type="domain">
    <text evidence="1 4">The probable endonuclease active site in the N-terminus and the basic amino acid cluster in the C-terminus are important for the shutoff activity. The C-terminus acts as a nuclear localization signal (By similarity). The C-terminus is recruited to host protein complexes involved in nuclear Pol II RNA processing (By similarity).</text>
</comment>
<comment type="similarity">
    <text evidence="6">Belongs to the influenza viruses PA-X family.</text>
</comment>
<dbReference type="EMBL" id="AF037424">
    <property type="status" value="NOT_ANNOTATED_CDS"/>
    <property type="molecule type" value="Genomic_RNA"/>
</dbReference>
<dbReference type="SMR" id="P0DJS2"/>
<dbReference type="GO" id="GO:0003723">
    <property type="term" value="F:RNA binding"/>
    <property type="evidence" value="ECO:0007669"/>
    <property type="project" value="InterPro"/>
</dbReference>
<dbReference type="GO" id="GO:0039694">
    <property type="term" value="P:viral RNA genome replication"/>
    <property type="evidence" value="ECO:0007669"/>
    <property type="project" value="InterPro"/>
</dbReference>
<dbReference type="GO" id="GO:0075523">
    <property type="term" value="P:viral translational frameshifting"/>
    <property type="evidence" value="ECO:0007669"/>
    <property type="project" value="UniProtKB-KW"/>
</dbReference>
<dbReference type="FunFam" id="3.40.91.90:FF:000001">
    <property type="entry name" value="Polymerase acidic protein"/>
    <property type="match status" value="1"/>
</dbReference>
<dbReference type="Gene3D" id="3.40.91.90">
    <property type="entry name" value="Influenza RNA-dependent RNA polymerase subunit PA, endonuclease domain"/>
    <property type="match status" value="1"/>
</dbReference>
<dbReference type="InterPro" id="IPR001009">
    <property type="entry name" value="PA/PA-X"/>
</dbReference>
<dbReference type="InterPro" id="IPR038372">
    <property type="entry name" value="PA/PA-X_sf"/>
</dbReference>
<dbReference type="Pfam" id="PF00603">
    <property type="entry name" value="Flu_PA"/>
    <property type="match status" value="1"/>
</dbReference>
<accession>P0DJS2</accession>
<keyword id="KW-1132">Decay of host mRNAs by virus</keyword>
<keyword id="KW-1262">Eukaryotic host gene expression shutoff by virus</keyword>
<keyword id="KW-1035">Host cytoplasm</keyword>
<keyword id="KW-1190">Host gene expression shutoff by virus</keyword>
<keyword id="KW-1192">Host mRNA suppression by virus</keyword>
<keyword id="KW-1048">Host nucleus</keyword>
<keyword id="KW-0945">Host-virus interaction</keyword>
<keyword id="KW-0688">Ribosomal frameshifting</keyword>
<gene>
    <name type="primary">PA</name>
</gene>